<reference key="1">
    <citation type="journal article" date="2000" name="Nature">
        <title>Complete DNA sequence of a serogroup A strain of Neisseria meningitidis Z2491.</title>
        <authorList>
            <person name="Parkhill J."/>
            <person name="Achtman M."/>
            <person name="James K.D."/>
            <person name="Bentley S.D."/>
            <person name="Churcher C.M."/>
            <person name="Klee S.R."/>
            <person name="Morelli G."/>
            <person name="Basham D."/>
            <person name="Brown D."/>
            <person name="Chillingworth T."/>
            <person name="Davies R.M."/>
            <person name="Davis P."/>
            <person name="Devlin K."/>
            <person name="Feltwell T."/>
            <person name="Hamlin N."/>
            <person name="Holroyd S."/>
            <person name="Jagels K."/>
            <person name="Leather S."/>
            <person name="Moule S."/>
            <person name="Mungall K.L."/>
            <person name="Quail M.A."/>
            <person name="Rajandream M.A."/>
            <person name="Rutherford K.M."/>
            <person name="Simmonds M."/>
            <person name="Skelton J."/>
            <person name="Whitehead S."/>
            <person name="Spratt B.G."/>
            <person name="Barrell B.G."/>
        </authorList>
    </citation>
    <scope>NUCLEOTIDE SEQUENCE [LARGE SCALE GENOMIC DNA]</scope>
    <source>
        <strain>DSM 15465 / Z2491</strain>
    </source>
</reference>
<evidence type="ECO:0000255" key="1">
    <source>
        <dbReference type="HAMAP-Rule" id="MF_00472"/>
    </source>
</evidence>
<protein>
    <recommendedName>
        <fullName evidence="1">Ubiquinone biosynthesis O-methyltransferase</fullName>
    </recommendedName>
    <alternativeName>
        <fullName evidence="1">2-polyprenyl-6-hydroxyphenol methylase</fullName>
        <ecNumber evidence="1">2.1.1.222</ecNumber>
    </alternativeName>
    <alternativeName>
        <fullName evidence="1">3-demethylubiquinone 3-O-methyltransferase</fullName>
        <ecNumber evidence="1">2.1.1.64</ecNumber>
    </alternativeName>
</protein>
<feature type="chain" id="PRO_0000193385" description="Ubiquinone biosynthesis O-methyltransferase">
    <location>
        <begin position="1"/>
        <end position="238"/>
    </location>
</feature>
<feature type="binding site" evidence="1">
    <location>
        <position position="40"/>
    </location>
    <ligand>
        <name>S-adenosyl-L-methionine</name>
        <dbReference type="ChEBI" id="CHEBI:59789"/>
    </ligand>
</feature>
<feature type="binding site" evidence="1">
    <location>
        <position position="59"/>
    </location>
    <ligand>
        <name>S-adenosyl-L-methionine</name>
        <dbReference type="ChEBI" id="CHEBI:59789"/>
    </ligand>
</feature>
<feature type="binding site" evidence="1">
    <location>
        <position position="81"/>
    </location>
    <ligand>
        <name>S-adenosyl-L-methionine</name>
        <dbReference type="ChEBI" id="CHEBI:59789"/>
    </ligand>
</feature>
<feature type="binding site" evidence="1">
    <location>
        <position position="126"/>
    </location>
    <ligand>
        <name>S-adenosyl-L-methionine</name>
        <dbReference type="ChEBI" id="CHEBI:59789"/>
    </ligand>
</feature>
<proteinExistence type="inferred from homology"/>
<keyword id="KW-0489">Methyltransferase</keyword>
<keyword id="KW-0949">S-adenosyl-L-methionine</keyword>
<keyword id="KW-0808">Transferase</keyword>
<keyword id="KW-0831">Ubiquinone biosynthesis</keyword>
<name>UBIG_NEIMA</name>
<accession>Q9JWE6</accession>
<accession>A1IPM7</accession>
<organism>
    <name type="scientific">Neisseria meningitidis serogroup A / serotype 4A (strain DSM 15465 / Z2491)</name>
    <dbReference type="NCBI Taxonomy" id="122587"/>
    <lineage>
        <taxon>Bacteria</taxon>
        <taxon>Pseudomonadati</taxon>
        <taxon>Pseudomonadota</taxon>
        <taxon>Betaproteobacteria</taxon>
        <taxon>Neisseriales</taxon>
        <taxon>Neisseriaceae</taxon>
        <taxon>Neisseria</taxon>
    </lineage>
</organism>
<sequence length="238" mass="26572">MSDKKYNVDEGEIAKFSRIADKWWDKSGEFKTLHDINPLRLDYIDGHADLCGKRVLDVGCGGGILAESMARRGAAFVKGIDMAEQSLETARLHAALNNVADIEYECIRVEDLAEAEPHSFDVVTCMEMMEHVPDPAAIVRACAKLVKPDGMVFFSTINKNPKSYLHLIVAAEYLLKFVPKGTHDWKKFIVPAELARMCRQAGLDVADTKGMTYHVLSQTYALCDSTDVNYMFACRPAF</sequence>
<dbReference type="EC" id="2.1.1.222" evidence="1"/>
<dbReference type="EC" id="2.1.1.64" evidence="1"/>
<dbReference type="EMBL" id="AL157959">
    <property type="protein sequence ID" value="CAM07698.1"/>
    <property type="molecule type" value="Genomic_DNA"/>
</dbReference>
<dbReference type="PIR" id="E81957">
    <property type="entry name" value="E81957"/>
</dbReference>
<dbReference type="SMR" id="Q9JWE6"/>
<dbReference type="EnsemblBacteria" id="CAM07698">
    <property type="protein sequence ID" value="CAM07698"/>
    <property type="gene ID" value="NMA0410"/>
</dbReference>
<dbReference type="KEGG" id="nma:NMA0410"/>
<dbReference type="HOGENOM" id="CLU_042432_5_0_4"/>
<dbReference type="UniPathway" id="UPA00232"/>
<dbReference type="Proteomes" id="UP000000626">
    <property type="component" value="Chromosome"/>
</dbReference>
<dbReference type="GO" id="GO:0102208">
    <property type="term" value="F:2-polyprenyl-6-hydroxyphenol methylase activity"/>
    <property type="evidence" value="ECO:0007669"/>
    <property type="project" value="UniProtKB-EC"/>
</dbReference>
<dbReference type="GO" id="GO:0061542">
    <property type="term" value="F:3-demethylubiquinol 3-O-methyltransferase activity"/>
    <property type="evidence" value="ECO:0007669"/>
    <property type="project" value="UniProtKB-UniRule"/>
</dbReference>
<dbReference type="GO" id="GO:0010420">
    <property type="term" value="F:polyprenyldihydroxybenzoate methyltransferase activity"/>
    <property type="evidence" value="ECO:0007669"/>
    <property type="project" value="InterPro"/>
</dbReference>
<dbReference type="GO" id="GO:0032259">
    <property type="term" value="P:methylation"/>
    <property type="evidence" value="ECO:0007669"/>
    <property type="project" value="UniProtKB-KW"/>
</dbReference>
<dbReference type="CDD" id="cd02440">
    <property type="entry name" value="AdoMet_MTases"/>
    <property type="match status" value="1"/>
</dbReference>
<dbReference type="FunFam" id="3.40.50.150:FF:000028">
    <property type="entry name" value="Ubiquinone biosynthesis O-methyltransferase"/>
    <property type="match status" value="1"/>
</dbReference>
<dbReference type="Gene3D" id="3.40.50.150">
    <property type="entry name" value="Vaccinia Virus protein VP39"/>
    <property type="match status" value="1"/>
</dbReference>
<dbReference type="HAMAP" id="MF_00472">
    <property type="entry name" value="UbiG"/>
    <property type="match status" value="1"/>
</dbReference>
<dbReference type="InterPro" id="IPR029063">
    <property type="entry name" value="SAM-dependent_MTases_sf"/>
</dbReference>
<dbReference type="InterPro" id="IPR010233">
    <property type="entry name" value="UbiG_MeTrfase"/>
</dbReference>
<dbReference type="NCBIfam" id="TIGR01983">
    <property type="entry name" value="UbiG"/>
    <property type="match status" value="1"/>
</dbReference>
<dbReference type="PANTHER" id="PTHR43464">
    <property type="entry name" value="METHYLTRANSFERASE"/>
    <property type="match status" value="1"/>
</dbReference>
<dbReference type="PANTHER" id="PTHR43464:SF19">
    <property type="entry name" value="UBIQUINONE BIOSYNTHESIS O-METHYLTRANSFERASE, MITOCHONDRIAL"/>
    <property type="match status" value="1"/>
</dbReference>
<dbReference type="Pfam" id="PF13489">
    <property type="entry name" value="Methyltransf_23"/>
    <property type="match status" value="1"/>
</dbReference>
<dbReference type="SUPFAM" id="SSF53335">
    <property type="entry name" value="S-adenosyl-L-methionine-dependent methyltransferases"/>
    <property type="match status" value="1"/>
</dbReference>
<gene>
    <name evidence="1" type="primary">ubiG</name>
    <name type="ordered locus">NMA0410</name>
</gene>
<comment type="function">
    <text evidence="1">O-methyltransferase that catalyzes the 2 O-methylation steps in the ubiquinone biosynthetic pathway.</text>
</comment>
<comment type="catalytic activity">
    <reaction evidence="1">
        <text>a 3-demethylubiquinol + S-adenosyl-L-methionine = a ubiquinol + S-adenosyl-L-homocysteine + H(+)</text>
        <dbReference type="Rhea" id="RHEA:44380"/>
        <dbReference type="Rhea" id="RHEA-COMP:9566"/>
        <dbReference type="Rhea" id="RHEA-COMP:10914"/>
        <dbReference type="ChEBI" id="CHEBI:15378"/>
        <dbReference type="ChEBI" id="CHEBI:17976"/>
        <dbReference type="ChEBI" id="CHEBI:57856"/>
        <dbReference type="ChEBI" id="CHEBI:59789"/>
        <dbReference type="ChEBI" id="CHEBI:84422"/>
        <dbReference type="EC" id="2.1.1.64"/>
    </reaction>
</comment>
<comment type="catalytic activity">
    <reaction evidence="1">
        <text>a 3-(all-trans-polyprenyl)benzene-1,2-diol + S-adenosyl-L-methionine = a 2-methoxy-6-(all-trans-polyprenyl)phenol + S-adenosyl-L-homocysteine + H(+)</text>
        <dbReference type="Rhea" id="RHEA:31411"/>
        <dbReference type="Rhea" id="RHEA-COMP:9550"/>
        <dbReference type="Rhea" id="RHEA-COMP:9551"/>
        <dbReference type="ChEBI" id="CHEBI:15378"/>
        <dbReference type="ChEBI" id="CHEBI:57856"/>
        <dbReference type="ChEBI" id="CHEBI:59789"/>
        <dbReference type="ChEBI" id="CHEBI:62729"/>
        <dbReference type="ChEBI" id="CHEBI:62731"/>
        <dbReference type="EC" id="2.1.1.222"/>
    </reaction>
</comment>
<comment type="pathway">
    <text evidence="1">Cofactor biosynthesis; ubiquinone biosynthesis.</text>
</comment>
<comment type="similarity">
    <text evidence="1">Belongs to the methyltransferase superfamily. UbiG/COQ3 family.</text>
</comment>